<proteinExistence type="inferred from homology"/>
<accession>Q73EN5</accession>
<evidence type="ECO:0000255" key="1">
    <source>
        <dbReference type="HAMAP-Rule" id="MF_00420"/>
    </source>
</evidence>
<gene>
    <name evidence="1" type="primary">purL</name>
    <name type="ordered locus">BCE_0323</name>
</gene>
<protein>
    <recommendedName>
        <fullName evidence="1">Phosphoribosylformylglycinamidine synthase subunit PurL</fullName>
        <shortName evidence="1">FGAM synthase</shortName>
        <ecNumber evidence="1">6.3.5.3</ecNumber>
    </recommendedName>
    <alternativeName>
        <fullName evidence="1">Formylglycinamide ribonucleotide amidotransferase subunit II</fullName>
        <shortName evidence="1">FGAR amidotransferase II</shortName>
        <shortName evidence="1">FGAR-AT II</shortName>
    </alternativeName>
    <alternativeName>
        <fullName evidence="1">Glutamine amidotransferase PurL</fullName>
    </alternativeName>
    <alternativeName>
        <fullName evidence="1">Phosphoribosylformylglycinamidine synthase subunit II</fullName>
    </alternativeName>
</protein>
<keyword id="KW-0067">ATP-binding</keyword>
<keyword id="KW-0963">Cytoplasm</keyword>
<keyword id="KW-0436">Ligase</keyword>
<keyword id="KW-0460">Magnesium</keyword>
<keyword id="KW-0479">Metal-binding</keyword>
<keyword id="KW-0547">Nucleotide-binding</keyword>
<keyword id="KW-0658">Purine biosynthesis</keyword>
<dbReference type="EC" id="6.3.5.3" evidence="1"/>
<dbReference type="EMBL" id="AE017194">
    <property type="protein sequence ID" value="AAS39259.1"/>
    <property type="molecule type" value="Genomic_DNA"/>
</dbReference>
<dbReference type="SMR" id="Q73EN5"/>
<dbReference type="KEGG" id="bca:BCE_0323"/>
<dbReference type="HOGENOM" id="CLU_003100_0_1_9"/>
<dbReference type="UniPathway" id="UPA00074">
    <property type="reaction ID" value="UER00128"/>
</dbReference>
<dbReference type="Proteomes" id="UP000002527">
    <property type="component" value="Chromosome"/>
</dbReference>
<dbReference type="GO" id="GO:0005737">
    <property type="term" value="C:cytoplasm"/>
    <property type="evidence" value="ECO:0007669"/>
    <property type="project" value="UniProtKB-SubCell"/>
</dbReference>
<dbReference type="GO" id="GO:0005524">
    <property type="term" value="F:ATP binding"/>
    <property type="evidence" value="ECO:0007669"/>
    <property type="project" value="UniProtKB-UniRule"/>
</dbReference>
<dbReference type="GO" id="GO:0000287">
    <property type="term" value="F:magnesium ion binding"/>
    <property type="evidence" value="ECO:0007669"/>
    <property type="project" value="UniProtKB-UniRule"/>
</dbReference>
<dbReference type="GO" id="GO:0004642">
    <property type="term" value="F:phosphoribosylformylglycinamidine synthase activity"/>
    <property type="evidence" value="ECO:0007669"/>
    <property type="project" value="UniProtKB-UniRule"/>
</dbReference>
<dbReference type="GO" id="GO:0006189">
    <property type="term" value="P:'de novo' IMP biosynthetic process"/>
    <property type="evidence" value="ECO:0007669"/>
    <property type="project" value="UniProtKB-UniRule"/>
</dbReference>
<dbReference type="CDD" id="cd02203">
    <property type="entry name" value="PurL_repeat1"/>
    <property type="match status" value="1"/>
</dbReference>
<dbReference type="CDD" id="cd02204">
    <property type="entry name" value="PurL_repeat2"/>
    <property type="match status" value="1"/>
</dbReference>
<dbReference type="FunFam" id="3.30.1330.10:FF:000004">
    <property type="entry name" value="Phosphoribosylformylglycinamidine synthase subunit PurL"/>
    <property type="match status" value="1"/>
</dbReference>
<dbReference type="FunFam" id="3.30.1330.10:FF:000011">
    <property type="entry name" value="Phosphoribosylformylglycinamidine synthase subunit PurL"/>
    <property type="match status" value="1"/>
</dbReference>
<dbReference type="FunFam" id="3.90.650.10:FF:000009">
    <property type="entry name" value="Phosphoribosylformylglycinamidine synthase subunit PurL"/>
    <property type="match status" value="1"/>
</dbReference>
<dbReference type="FunFam" id="3.90.650.10:FF:000013">
    <property type="entry name" value="Phosphoribosylformylglycinamidine synthase subunit PurL"/>
    <property type="match status" value="1"/>
</dbReference>
<dbReference type="Gene3D" id="3.90.650.10">
    <property type="entry name" value="PurM-like C-terminal domain"/>
    <property type="match status" value="2"/>
</dbReference>
<dbReference type="Gene3D" id="3.30.1330.10">
    <property type="entry name" value="PurM-like, N-terminal domain"/>
    <property type="match status" value="2"/>
</dbReference>
<dbReference type="HAMAP" id="MF_00420">
    <property type="entry name" value="PurL_2"/>
    <property type="match status" value="1"/>
</dbReference>
<dbReference type="InterPro" id="IPR010074">
    <property type="entry name" value="PRibForGlyAmidine_synth_PurL"/>
</dbReference>
<dbReference type="InterPro" id="IPR041609">
    <property type="entry name" value="PurL_linker"/>
</dbReference>
<dbReference type="InterPro" id="IPR010918">
    <property type="entry name" value="PurM-like_C_dom"/>
</dbReference>
<dbReference type="InterPro" id="IPR036676">
    <property type="entry name" value="PurM-like_C_sf"/>
</dbReference>
<dbReference type="InterPro" id="IPR016188">
    <property type="entry name" value="PurM-like_N"/>
</dbReference>
<dbReference type="InterPro" id="IPR036921">
    <property type="entry name" value="PurM-like_N_sf"/>
</dbReference>
<dbReference type="NCBIfam" id="TIGR01736">
    <property type="entry name" value="FGAM_synth_II"/>
    <property type="match status" value="1"/>
</dbReference>
<dbReference type="NCBIfam" id="NF002290">
    <property type="entry name" value="PRK01213.1"/>
    <property type="match status" value="1"/>
</dbReference>
<dbReference type="PANTHER" id="PTHR43555">
    <property type="entry name" value="PHOSPHORIBOSYLFORMYLGLYCINAMIDINE SYNTHASE SUBUNIT PURL"/>
    <property type="match status" value="1"/>
</dbReference>
<dbReference type="PANTHER" id="PTHR43555:SF1">
    <property type="entry name" value="PHOSPHORIBOSYLFORMYLGLYCINAMIDINE SYNTHASE SUBUNIT PURL"/>
    <property type="match status" value="1"/>
</dbReference>
<dbReference type="Pfam" id="PF00586">
    <property type="entry name" value="AIRS"/>
    <property type="match status" value="2"/>
</dbReference>
<dbReference type="Pfam" id="PF02769">
    <property type="entry name" value="AIRS_C"/>
    <property type="match status" value="2"/>
</dbReference>
<dbReference type="Pfam" id="PF18072">
    <property type="entry name" value="FGAR-AT_linker"/>
    <property type="match status" value="1"/>
</dbReference>
<dbReference type="PIRSF" id="PIRSF001587">
    <property type="entry name" value="FGAM_synthase_II"/>
    <property type="match status" value="1"/>
</dbReference>
<dbReference type="SUPFAM" id="SSF56042">
    <property type="entry name" value="PurM C-terminal domain-like"/>
    <property type="match status" value="2"/>
</dbReference>
<dbReference type="SUPFAM" id="SSF55326">
    <property type="entry name" value="PurM N-terminal domain-like"/>
    <property type="match status" value="2"/>
</dbReference>
<name>PURL_BACC1</name>
<organism>
    <name type="scientific">Bacillus cereus (strain ATCC 10987 / NRS 248)</name>
    <dbReference type="NCBI Taxonomy" id="222523"/>
    <lineage>
        <taxon>Bacteria</taxon>
        <taxon>Bacillati</taxon>
        <taxon>Bacillota</taxon>
        <taxon>Bacilli</taxon>
        <taxon>Bacillales</taxon>
        <taxon>Bacillaceae</taxon>
        <taxon>Bacillus</taxon>
        <taxon>Bacillus cereus group</taxon>
    </lineage>
</organism>
<reference key="1">
    <citation type="journal article" date="2004" name="Nucleic Acids Res.">
        <title>The genome sequence of Bacillus cereus ATCC 10987 reveals metabolic adaptations and a large plasmid related to Bacillus anthracis pXO1.</title>
        <authorList>
            <person name="Rasko D.A."/>
            <person name="Ravel J."/>
            <person name="Oekstad O.A."/>
            <person name="Helgason E."/>
            <person name="Cer R.Z."/>
            <person name="Jiang L."/>
            <person name="Shores K.A."/>
            <person name="Fouts D.E."/>
            <person name="Tourasse N.J."/>
            <person name="Angiuoli S.V."/>
            <person name="Kolonay J.F."/>
            <person name="Nelson W.C."/>
            <person name="Kolstoe A.-B."/>
            <person name="Fraser C.M."/>
            <person name="Read T.D."/>
        </authorList>
    </citation>
    <scope>NUCLEOTIDE SEQUENCE [LARGE SCALE GENOMIC DNA]</scope>
    <source>
        <strain>ATCC 10987 / NRS 248</strain>
    </source>
</reference>
<feature type="chain" id="PRO_0000100433" description="Phosphoribosylformylglycinamidine synthase subunit PurL">
    <location>
        <begin position="1"/>
        <end position="739"/>
    </location>
</feature>
<feature type="active site" evidence="1">
    <location>
        <position position="54"/>
    </location>
</feature>
<feature type="active site" description="Proton acceptor" evidence="1">
    <location>
        <position position="100"/>
    </location>
</feature>
<feature type="binding site" evidence="1">
    <location>
        <position position="57"/>
    </location>
    <ligand>
        <name>ATP</name>
        <dbReference type="ChEBI" id="CHEBI:30616"/>
    </ligand>
</feature>
<feature type="binding site" evidence="1">
    <location>
        <position position="96"/>
    </location>
    <ligand>
        <name>ATP</name>
        <dbReference type="ChEBI" id="CHEBI:30616"/>
    </ligand>
</feature>
<feature type="binding site" evidence="1">
    <location>
        <position position="98"/>
    </location>
    <ligand>
        <name>Mg(2+)</name>
        <dbReference type="ChEBI" id="CHEBI:18420"/>
        <label>1</label>
    </ligand>
</feature>
<feature type="binding site" evidence="1">
    <location>
        <begin position="99"/>
        <end position="102"/>
    </location>
    <ligand>
        <name>substrate</name>
    </ligand>
</feature>
<feature type="binding site" evidence="1">
    <location>
        <position position="121"/>
    </location>
    <ligand>
        <name>substrate</name>
    </ligand>
</feature>
<feature type="binding site" evidence="1">
    <location>
        <position position="122"/>
    </location>
    <ligand>
        <name>Mg(2+)</name>
        <dbReference type="ChEBI" id="CHEBI:18420"/>
        <label>2</label>
    </ligand>
</feature>
<feature type="binding site" evidence="1">
    <location>
        <position position="245"/>
    </location>
    <ligand>
        <name>substrate</name>
    </ligand>
</feature>
<feature type="binding site" evidence="1">
    <location>
        <position position="273"/>
    </location>
    <ligand>
        <name>Mg(2+)</name>
        <dbReference type="ChEBI" id="CHEBI:18420"/>
        <label>2</label>
    </ligand>
</feature>
<feature type="binding site" evidence="1">
    <location>
        <begin position="317"/>
        <end position="319"/>
    </location>
    <ligand>
        <name>substrate</name>
    </ligand>
</feature>
<feature type="binding site" evidence="1">
    <location>
        <position position="500"/>
    </location>
    <ligand>
        <name>ATP</name>
        <dbReference type="ChEBI" id="CHEBI:30616"/>
    </ligand>
</feature>
<feature type="binding site" evidence="1">
    <location>
        <position position="537"/>
    </location>
    <ligand>
        <name>ATP</name>
        <dbReference type="ChEBI" id="CHEBI:30616"/>
    </ligand>
</feature>
<feature type="binding site" evidence="1">
    <location>
        <position position="538"/>
    </location>
    <ligand>
        <name>Mg(2+)</name>
        <dbReference type="ChEBI" id="CHEBI:18420"/>
        <label>1</label>
    </ligand>
</feature>
<feature type="binding site" evidence="1">
    <location>
        <position position="540"/>
    </location>
    <ligand>
        <name>substrate</name>
    </ligand>
</feature>
<sequence>MSLMLEPNPTQIKEERIYAEMGLTDEEFAMVEKILGRLPNYTETGLFSVMWSEHCSYKNSKPVLRKFPTTGERVLQGPGEGAGIVDIGDNQAVVFKMESHNHPSAIEPYQGAATGVGGIIRDVFSMGARPVALLNSLRFGELQSPRVKYLFEEVVAGIAGYGNCIGIPTVGGEVQFDPCYEGNPLVNAMCVGLINHEDIKKGQAHGAGNTVMYVGASTGRDGIHGATFASEELSESSEAKRPAVQVGDPFMEKLLIEACLELIQSDALVGIQDMGAAGLTSSSAEMASKAGMGIEMYLDDVPQRETGMTPYEMMLSESQERMLIVVKKGREQEIVDLFEKYGLAAVTMGKVTEDKMLRLFHKGEMVAEVPADALAEEAPIYHKPSQEAAYFAEFQQMKMETPKVENYKETLFALLQQPTIASKEWVYDQYDYQVRTSTVVTPGSDAAVVRVRGTEKGLAMTTDCNSRYIYLDPEMGGKIAVAEAARNIVCSGGEPLAITDCLNFGNPEKPEIFWQIEKSVDGMSEACRTLQTPVIGGNVSMYNERSGEAVYPTPTVGMVGLVHDLKHVTTQEFKQAGDLVYVIGETKAEFGGSELQKMLHGKIFGQSPSIDLDVELKRQKQVLAAIQAGLVQSAHDVAEGGLAVAISESAIGANGLGATVKLDGEATAALFAESQSRFVITVKRENKEAFEKAVEAIQVGEVTNTNEVTIHNEENEVLLTANVDEMRKAWKGAIPCLLK</sequence>
<comment type="function">
    <text evidence="1">Part of the phosphoribosylformylglycinamidine synthase complex involved in the purines biosynthetic pathway. Catalyzes the ATP-dependent conversion of formylglycinamide ribonucleotide (FGAR) and glutamine to yield formylglycinamidine ribonucleotide (FGAM) and glutamate. The FGAM synthase complex is composed of three subunits. PurQ produces an ammonia molecule by converting glutamine to glutamate. PurL transfers the ammonia molecule to FGAR to form FGAM in an ATP-dependent manner. PurS interacts with PurQ and PurL and is thought to assist in the transfer of the ammonia molecule from PurQ to PurL.</text>
</comment>
<comment type="catalytic activity">
    <reaction evidence="1">
        <text>N(2)-formyl-N(1)-(5-phospho-beta-D-ribosyl)glycinamide + L-glutamine + ATP + H2O = 2-formamido-N(1)-(5-O-phospho-beta-D-ribosyl)acetamidine + L-glutamate + ADP + phosphate + H(+)</text>
        <dbReference type="Rhea" id="RHEA:17129"/>
        <dbReference type="ChEBI" id="CHEBI:15377"/>
        <dbReference type="ChEBI" id="CHEBI:15378"/>
        <dbReference type="ChEBI" id="CHEBI:29985"/>
        <dbReference type="ChEBI" id="CHEBI:30616"/>
        <dbReference type="ChEBI" id="CHEBI:43474"/>
        <dbReference type="ChEBI" id="CHEBI:58359"/>
        <dbReference type="ChEBI" id="CHEBI:147286"/>
        <dbReference type="ChEBI" id="CHEBI:147287"/>
        <dbReference type="ChEBI" id="CHEBI:456216"/>
        <dbReference type="EC" id="6.3.5.3"/>
    </reaction>
</comment>
<comment type="pathway">
    <text evidence="1">Purine metabolism; IMP biosynthesis via de novo pathway; 5-amino-1-(5-phospho-D-ribosyl)imidazole from N(2)-formyl-N(1)-(5-phospho-D-ribosyl)glycinamide: step 1/2.</text>
</comment>
<comment type="subunit">
    <text evidence="1">Monomer. Part of the FGAM synthase complex composed of 1 PurL, 1 PurQ and 2 PurS subunits.</text>
</comment>
<comment type="subcellular location">
    <subcellularLocation>
        <location evidence="1">Cytoplasm</location>
    </subcellularLocation>
</comment>
<comment type="similarity">
    <text evidence="1">Belongs to the FGAMS family.</text>
</comment>